<comment type="function">
    <text evidence="1">Transfers the 4'-phosphopantetheine moiety from coenzyme A to a Ser of acyl-carrier-protein.</text>
</comment>
<comment type="catalytic activity">
    <reaction evidence="1">
        <text>apo-[ACP] + CoA = holo-[ACP] + adenosine 3',5'-bisphosphate + H(+)</text>
        <dbReference type="Rhea" id="RHEA:12068"/>
        <dbReference type="Rhea" id="RHEA-COMP:9685"/>
        <dbReference type="Rhea" id="RHEA-COMP:9690"/>
        <dbReference type="ChEBI" id="CHEBI:15378"/>
        <dbReference type="ChEBI" id="CHEBI:29999"/>
        <dbReference type="ChEBI" id="CHEBI:57287"/>
        <dbReference type="ChEBI" id="CHEBI:58343"/>
        <dbReference type="ChEBI" id="CHEBI:64479"/>
        <dbReference type="EC" id="2.7.8.7"/>
    </reaction>
</comment>
<comment type="cofactor">
    <cofactor evidence="1">
        <name>Mg(2+)</name>
        <dbReference type="ChEBI" id="CHEBI:18420"/>
    </cofactor>
</comment>
<comment type="subcellular location">
    <subcellularLocation>
        <location evidence="1">Cytoplasm</location>
    </subcellularLocation>
</comment>
<comment type="similarity">
    <text evidence="1">Belongs to the P-Pant transferase superfamily. AcpS family.</text>
</comment>
<protein>
    <recommendedName>
        <fullName evidence="1">Holo-[acyl-carrier-protein] synthase</fullName>
        <shortName evidence="1">Holo-ACP synthase</shortName>
        <ecNumber evidence="1">2.7.8.7</ecNumber>
    </recommendedName>
    <alternativeName>
        <fullName evidence="1">4'-phosphopantetheinyl transferase AcpS</fullName>
    </alternativeName>
</protein>
<organism>
    <name type="scientific">Mycobacterium leprae (strain TN)</name>
    <dbReference type="NCBI Taxonomy" id="272631"/>
    <lineage>
        <taxon>Bacteria</taxon>
        <taxon>Bacillati</taxon>
        <taxon>Actinomycetota</taxon>
        <taxon>Actinomycetes</taxon>
        <taxon>Mycobacteriales</taxon>
        <taxon>Mycobacteriaceae</taxon>
        <taxon>Mycobacterium</taxon>
    </lineage>
</organism>
<accession>Q9X7E3</accession>
<proteinExistence type="inferred from homology"/>
<sequence length="130" mass="14137">MGIVGVGIDLVSIPDFAEQVSQPGTVFMTIFTPGERRDASVKSSSAVCHLAARWAVKEAVIKAWSGSRFAQRPMLPENIHRDIEVVNDMWGRPRVRLTGAIAKHLTDVTIHVSLTHEGDIAAAVVILEVL</sequence>
<gene>
    <name evidence="1" type="primary">acpS</name>
    <name type="ordered locus">ML1192</name>
    <name type="ORF">MLCB458.07</name>
</gene>
<keyword id="KW-0963">Cytoplasm</keyword>
<keyword id="KW-0275">Fatty acid biosynthesis</keyword>
<keyword id="KW-0276">Fatty acid metabolism</keyword>
<keyword id="KW-0444">Lipid biosynthesis</keyword>
<keyword id="KW-0443">Lipid metabolism</keyword>
<keyword id="KW-0460">Magnesium</keyword>
<keyword id="KW-0479">Metal-binding</keyword>
<keyword id="KW-1185">Reference proteome</keyword>
<keyword id="KW-0808">Transferase</keyword>
<evidence type="ECO:0000255" key="1">
    <source>
        <dbReference type="HAMAP-Rule" id="MF_00101"/>
    </source>
</evidence>
<name>ACPS_MYCLE</name>
<feature type="chain" id="PRO_0000175669" description="Holo-[acyl-carrier-protein] synthase">
    <location>
        <begin position="1"/>
        <end position="130"/>
    </location>
</feature>
<feature type="binding site" evidence="1">
    <location>
        <position position="9"/>
    </location>
    <ligand>
        <name>Mg(2+)</name>
        <dbReference type="ChEBI" id="CHEBI:18420"/>
    </ligand>
</feature>
<feature type="binding site" evidence="1">
    <location>
        <position position="58"/>
    </location>
    <ligand>
        <name>Mg(2+)</name>
        <dbReference type="ChEBI" id="CHEBI:18420"/>
    </ligand>
</feature>
<reference key="1">
    <citation type="journal article" date="2001" name="Nature">
        <title>Massive gene decay in the leprosy bacillus.</title>
        <authorList>
            <person name="Cole S.T."/>
            <person name="Eiglmeier K."/>
            <person name="Parkhill J."/>
            <person name="James K.D."/>
            <person name="Thomson N.R."/>
            <person name="Wheeler P.R."/>
            <person name="Honore N."/>
            <person name="Garnier T."/>
            <person name="Churcher C.M."/>
            <person name="Harris D.E."/>
            <person name="Mungall K.L."/>
            <person name="Basham D."/>
            <person name="Brown D."/>
            <person name="Chillingworth T."/>
            <person name="Connor R."/>
            <person name="Davies R.M."/>
            <person name="Devlin K."/>
            <person name="Duthoy S."/>
            <person name="Feltwell T."/>
            <person name="Fraser A."/>
            <person name="Hamlin N."/>
            <person name="Holroyd S."/>
            <person name="Hornsby T."/>
            <person name="Jagels K."/>
            <person name="Lacroix C."/>
            <person name="Maclean J."/>
            <person name="Moule S."/>
            <person name="Murphy L.D."/>
            <person name="Oliver K."/>
            <person name="Quail M.A."/>
            <person name="Rajandream M.A."/>
            <person name="Rutherford K.M."/>
            <person name="Rutter S."/>
            <person name="Seeger K."/>
            <person name="Simon S."/>
            <person name="Simmonds M."/>
            <person name="Skelton J."/>
            <person name="Squares R."/>
            <person name="Squares S."/>
            <person name="Stevens K."/>
            <person name="Taylor K."/>
            <person name="Whitehead S."/>
            <person name="Woodward J.R."/>
            <person name="Barrell B.G."/>
        </authorList>
    </citation>
    <scope>NUCLEOTIDE SEQUENCE [LARGE SCALE GENOMIC DNA]</scope>
    <source>
        <strain>TN</strain>
    </source>
</reference>
<dbReference type="EC" id="2.7.8.7" evidence="1"/>
<dbReference type="EMBL" id="AL049478">
    <property type="protein sequence ID" value="CAB39572.1"/>
    <property type="molecule type" value="Genomic_DNA"/>
</dbReference>
<dbReference type="EMBL" id="AL583921">
    <property type="protein sequence ID" value="CAC31573.1"/>
    <property type="molecule type" value="Genomic_DNA"/>
</dbReference>
<dbReference type="PIR" id="B87058">
    <property type="entry name" value="B87058"/>
</dbReference>
<dbReference type="RefSeq" id="NP_301869.1">
    <property type="nucleotide sequence ID" value="NC_002677.1"/>
</dbReference>
<dbReference type="RefSeq" id="WP_010908190.1">
    <property type="nucleotide sequence ID" value="NC_002677.1"/>
</dbReference>
<dbReference type="SMR" id="Q9X7E3"/>
<dbReference type="STRING" id="272631.gene:17575023"/>
<dbReference type="KEGG" id="mle:ML1192"/>
<dbReference type="PATRIC" id="fig|272631.5.peg.2188"/>
<dbReference type="Leproma" id="ML1192"/>
<dbReference type="eggNOG" id="COG0736">
    <property type="taxonomic scope" value="Bacteria"/>
</dbReference>
<dbReference type="HOGENOM" id="CLU_089696_2_0_11"/>
<dbReference type="OrthoDB" id="517356at2"/>
<dbReference type="Proteomes" id="UP000000806">
    <property type="component" value="Chromosome"/>
</dbReference>
<dbReference type="GO" id="GO:0005737">
    <property type="term" value="C:cytoplasm"/>
    <property type="evidence" value="ECO:0007669"/>
    <property type="project" value="UniProtKB-SubCell"/>
</dbReference>
<dbReference type="GO" id="GO:0008897">
    <property type="term" value="F:holo-[acyl-carrier-protein] synthase activity"/>
    <property type="evidence" value="ECO:0007669"/>
    <property type="project" value="UniProtKB-UniRule"/>
</dbReference>
<dbReference type="GO" id="GO:0000287">
    <property type="term" value="F:magnesium ion binding"/>
    <property type="evidence" value="ECO:0007669"/>
    <property type="project" value="UniProtKB-UniRule"/>
</dbReference>
<dbReference type="GO" id="GO:0006633">
    <property type="term" value="P:fatty acid biosynthetic process"/>
    <property type="evidence" value="ECO:0007669"/>
    <property type="project" value="UniProtKB-UniRule"/>
</dbReference>
<dbReference type="Gene3D" id="3.90.470.20">
    <property type="entry name" value="4'-phosphopantetheinyl transferase domain"/>
    <property type="match status" value="1"/>
</dbReference>
<dbReference type="HAMAP" id="MF_00101">
    <property type="entry name" value="AcpS"/>
    <property type="match status" value="1"/>
</dbReference>
<dbReference type="InterPro" id="IPR008278">
    <property type="entry name" value="4-PPantetheinyl_Trfase_dom"/>
</dbReference>
<dbReference type="InterPro" id="IPR037143">
    <property type="entry name" value="4-PPantetheinyl_Trfase_dom_sf"/>
</dbReference>
<dbReference type="InterPro" id="IPR002582">
    <property type="entry name" value="ACPS"/>
</dbReference>
<dbReference type="InterPro" id="IPR004568">
    <property type="entry name" value="Ppantetheine-prot_Trfase_dom"/>
</dbReference>
<dbReference type="NCBIfam" id="TIGR00556">
    <property type="entry name" value="pantethn_trn"/>
    <property type="match status" value="1"/>
</dbReference>
<dbReference type="NCBIfam" id="NF000831">
    <property type="entry name" value="PRK00070.3-1"/>
    <property type="match status" value="1"/>
</dbReference>
<dbReference type="Pfam" id="PF01648">
    <property type="entry name" value="ACPS"/>
    <property type="match status" value="1"/>
</dbReference>
<dbReference type="SUPFAM" id="SSF56214">
    <property type="entry name" value="4'-phosphopantetheinyl transferase"/>
    <property type="match status" value="1"/>
</dbReference>